<protein>
    <recommendedName>
        <fullName>Bifunctional helicase and thymine dioxygenase JBP2</fullName>
    </recommendedName>
    <alternativeName>
        <fullName>J-binding protein 2</fullName>
    </alternativeName>
    <domain>
        <recommendedName>
            <fullName>Probable DNA helicase JBP2</fullName>
            <ecNumber evidence="1">3.6.4.12</ecNumber>
        </recommendedName>
    </domain>
    <domain>
        <recommendedName>
            <fullName>Thymine dioxygenase JBP2</fullName>
            <ecNumber evidence="3">1.14.11.6</ecNumber>
        </recommendedName>
    </domain>
</protein>
<organism>
    <name type="scientific">Leishmania infantum</name>
    <dbReference type="NCBI Taxonomy" id="5671"/>
    <lineage>
        <taxon>Eukaryota</taxon>
        <taxon>Discoba</taxon>
        <taxon>Euglenozoa</taxon>
        <taxon>Kinetoplastea</taxon>
        <taxon>Metakinetoplastina</taxon>
        <taxon>Trypanosomatida</taxon>
        <taxon>Trypanosomatidae</taxon>
        <taxon>Leishmaniinae</taxon>
        <taxon>Leishmania</taxon>
    </lineage>
</organism>
<sequence>MLNGLTRVSTSSELESILDIVQSSGEIAVVFTSPSIGDLETITSETQRRQLRIAGIPRGGYTILPAIPLYDDELLQMCERYTSANEYEKAEMRNSLYMREYPLFTYSIRHQRALFHPADYVSRILQFCSYYVQAPDADVLPLQDKSPFLHISPIKEICKHLRLIARGTPVAPDDSESPVPEQLRLHAESDAEKLAAERATAMSIATSSGGASETEQPSLFSGVAPSALFQKGAVEEVDKDAEDTMEDLTGEETVDAVHSFQAEYLTLDGFELVTKASIYYDREGEGQRVVAVYIPGGVPEDTCRAAAAVLEPAATKKNLRAPTNGGLPPDTGIVGYYDYLTNPTQHKCRETEYSRRNWGLLAQSEPLLKHLDKLYSQLAPMHHHLQRVAIPSQYQLCGTVFSTITVNRNFRTAVHTDKGDFRSGLGVLSVINGEFEGCHLAIKRLKKAFQLKVGDVLLFDTSLEHGNTEVVNPEIHWQRTSVVCYLRTGLMSSVCEMERRKHLNRLILLQLLNTEVRNTTVNINGADSSLPPLFVPTRLASHLAPVQLAALGFIVERTEKQSGCVVAMTMGLGKTLVALTLCFSQLHLAPQADILILTPKPIISHWVDEKNKWGMHGLHFPHFVASDGLNSLEFEQQLLEYERQRNNEKPKLGHIFVINGEYLAGFLRRFKRFTPLLMIVDEGHRVAAKGNKLTESLDRLRCNLRIVLSGTPLQNDASELYRLVGWVNKGVSRVLPPKRFQELANDINQFVEGDDGAFYNAVMAQEYIQDWMRGFVFREMENDLPPLHDYLLICGSSDVQREYEEKLGLTETAMTALKATEHRPHHLSTHPACYLAFISDSYQSMVSGWTVRAQSNTSRPRVSQLEEIDTMRLEQYVQLVENEQLDAFIDLSGKMRVLVDIVLRVQARKEKLIIFSLYVGSQDLIHRTLTALRVCTFTVRGRDSQDRRRRAMQEFSENKDLIVLVLSTKIAAYGLDFTAANHVVLFDSWWNPQVDAQAIARAYRRNQRKPVTVYRLISATENKFVLRSQTRKIALFKCILHERTSRQALPDELEDCAANEKDEERRIFWAKLKTTSLAGDSRALLNVYRYQESVRESE</sequence>
<accession>A4HVU6</accession>
<proteinExistence type="inferred from homology"/>
<evidence type="ECO:0000250" key="1">
    <source>
        <dbReference type="UniProtKB" id="B6EU02"/>
    </source>
</evidence>
<evidence type="ECO:0000250" key="2">
    <source>
        <dbReference type="UniProtKB" id="Q6N021"/>
    </source>
</evidence>
<evidence type="ECO:0000250" key="3">
    <source>
        <dbReference type="UniProtKB" id="Q9U6M1"/>
    </source>
</evidence>
<evidence type="ECO:0000255" key="4">
    <source>
        <dbReference type="PROSITE-ProRule" id="PRU00541"/>
    </source>
</evidence>
<evidence type="ECO:0000255" key="5">
    <source>
        <dbReference type="PROSITE-ProRule" id="PRU00542"/>
    </source>
</evidence>
<evidence type="ECO:0000305" key="6"/>
<feature type="chain" id="PRO_0000377559" description="Bifunctional helicase and thymine dioxygenase JBP2">
    <location>
        <begin position="1"/>
        <end position="1098"/>
    </location>
</feature>
<feature type="domain" description="Helicase ATP-binding" evidence="4">
    <location>
        <begin position="555"/>
        <end position="730"/>
    </location>
</feature>
<feature type="domain" description="Helicase C-terminal" evidence="5">
    <location>
        <begin position="897"/>
        <end position="1057"/>
    </location>
</feature>
<feature type="region of interest" description="Thymine dioxygenase">
    <location>
        <begin position="1"/>
        <end position="540"/>
    </location>
</feature>
<feature type="region of interest" description="DNA Helicase">
    <location>
        <begin position="541"/>
        <end position="1098"/>
    </location>
</feature>
<feature type="short sequence motif" description="DEAH box">
    <location>
        <begin position="681"/>
        <end position="684"/>
    </location>
</feature>
<feature type="binding site" evidence="2">
    <location>
        <position position="415"/>
    </location>
    <ligand>
        <name>Fe cation</name>
        <dbReference type="ChEBI" id="CHEBI:24875"/>
        <note>catalytic; for thymine dioxygenase activity</note>
    </ligand>
</feature>
<feature type="binding site" evidence="2">
    <location>
        <position position="417"/>
    </location>
    <ligand>
        <name>Fe cation</name>
        <dbReference type="ChEBI" id="CHEBI:24875"/>
        <note>catalytic; for thymine dioxygenase activity</note>
    </ligand>
</feature>
<feature type="binding site" evidence="2">
    <location>
        <position position="465"/>
    </location>
    <ligand>
        <name>Fe cation</name>
        <dbReference type="ChEBI" id="CHEBI:24875"/>
        <note>catalytic; for thymine dioxygenase activity</note>
    </ligand>
</feature>
<feature type="binding site" evidence="2">
    <location>
        <position position="479"/>
    </location>
    <ligand>
        <name>2-oxoglutarate</name>
        <dbReference type="ChEBI" id="CHEBI:16810"/>
    </ligand>
</feature>
<feature type="binding site" evidence="4">
    <location>
        <begin position="568"/>
        <end position="575"/>
    </location>
    <ligand>
        <name>ATP</name>
        <dbReference type="ChEBI" id="CHEBI:30616"/>
    </ligand>
</feature>
<name>JBP2_LEIIN</name>
<dbReference type="EC" id="3.6.4.12" evidence="1"/>
<dbReference type="EC" id="1.14.11.6" evidence="3"/>
<dbReference type="EMBL" id="FR796446">
    <property type="protein sequence ID" value="CAM66564.1"/>
    <property type="status" value="ALT_INIT"/>
    <property type="molecule type" value="Genomic_DNA"/>
</dbReference>
<dbReference type="RefSeq" id="XP_001464187.1">
    <property type="nucleotide sequence ID" value="XM_001464150.1"/>
</dbReference>
<dbReference type="SMR" id="A4HVU6"/>
<dbReference type="STRING" id="5671.A4HVU6"/>
<dbReference type="GeneID" id="5067670"/>
<dbReference type="KEGG" id="lif:LINJ_14_0040"/>
<dbReference type="VEuPathDB" id="TriTrypDB:LINF_140005300"/>
<dbReference type="eggNOG" id="KOG0387">
    <property type="taxonomic scope" value="Eukaryota"/>
</dbReference>
<dbReference type="InParanoid" id="A4HVU6"/>
<dbReference type="Proteomes" id="UP000008153">
    <property type="component" value="Chromosome 14"/>
</dbReference>
<dbReference type="GO" id="GO:0005634">
    <property type="term" value="C:nucleus"/>
    <property type="evidence" value="ECO:0007669"/>
    <property type="project" value="UniProtKB-SubCell"/>
</dbReference>
<dbReference type="GO" id="GO:0005524">
    <property type="term" value="F:ATP binding"/>
    <property type="evidence" value="ECO:0007669"/>
    <property type="project" value="UniProtKB-KW"/>
</dbReference>
<dbReference type="GO" id="GO:0016887">
    <property type="term" value="F:ATP hydrolysis activity"/>
    <property type="evidence" value="ECO:0007669"/>
    <property type="project" value="RHEA"/>
</dbReference>
<dbReference type="GO" id="GO:0003677">
    <property type="term" value="F:DNA binding"/>
    <property type="evidence" value="ECO:0007669"/>
    <property type="project" value="UniProtKB-KW"/>
</dbReference>
<dbReference type="GO" id="GO:0015616">
    <property type="term" value="F:DNA translocase activity"/>
    <property type="evidence" value="ECO:0007669"/>
    <property type="project" value="TreeGrafter"/>
</dbReference>
<dbReference type="GO" id="GO:0004386">
    <property type="term" value="F:helicase activity"/>
    <property type="evidence" value="ECO:0007669"/>
    <property type="project" value="UniProtKB-KW"/>
</dbReference>
<dbReference type="GO" id="GO:0046872">
    <property type="term" value="F:metal ion binding"/>
    <property type="evidence" value="ECO:0007669"/>
    <property type="project" value="UniProtKB-KW"/>
</dbReference>
<dbReference type="GO" id="GO:0050341">
    <property type="term" value="F:thymine dioxygenase activity"/>
    <property type="evidence" value="ECO:0007669"/>
    <property type="project" value="UniProtKB-EC"/>
</dbReference>
<dbReference type="GO" id="GO:0070580">
    <property type="term" value="P:base J metabolic process"/>
    <property type="evidence" value="ECO:0007669"/>
    <property type="project" value="UniProtKB-ARBA"/>
</dbReference>
<dbReference type="GO" id="GO:0000724">
    <property type="term" value="P:double-strand break repair via homologous recombination"/>
    <property type="evidence" value="ECO:0007669"/>
    <property type="project" value="TreeGrafter"/>
</dbReference>
<dbReference type="GO" id="GO:0007131">
    <property type="term" value="P:reciprocal meiotic recombination"/>
    <property type="evidence" value="ECO:0007669"/>
    <property type="project" value="TreeGrafter"/>
</dbReference>
<dbReference type="CDD" id="cd17919">
    <property type="entry name" value="DEXHc_Snf"/>
    <property type="match status" value="1"/>
</dbReference>
<dbReference type="CDD" id="cd18793">
    <property type="entry name" value="SF2_C_SNF"/>
    <property type="match status" value="1"/>
</dbReference>
<dbReference type="FunFam" id="3.40.50.10810:FF:000072">
    <property type="entry name" value="Bifunctional helicase and thymine dioxygenase JBP2"/>
    <property type="match status" value="1"/>
</dbReference>
<dbReference type="FunFam" id="3.40.50.300:FF:003412">
    <property type="entry name" value="Bifunctional helicase and thymine dioxygenase JBP2"/>
    <property type="match status" value="1"/>
</dbReference>
<dbReference type="FunFam" id="3.60.130.30:FF:000001">
    <property type="entry name" value="Bifunctional helicase and thymine dioxygenase JBP2"/>
    <property type="match status" value="1"/>
</dbReference>
<dbReference type="Gene3D" id="3.60.130.30">
    <property type="match status" value="1"/>
</dbReference>
<dbReference type="Gene3D" id="3.40.50.300">
    <property type="entry name" value="P-loop containing nucleotide triphosphate hydrolases"/>
    <property type="match status" value="1"/>
</dbReference>
<dbReference type="Gene3D" id="3.40.50.10810">
    <property type="entry name" value="Tandem AAA-ATPase domain"/>
    <property type="match status" value="1"/>
</dbReference>
<dbReference type="InterPro" id="IPR024779">
    <property type="entry name" value="2OGFeDO_JBP1/TET_oxygenase_dom"/>
</dbReference>
<dbReference type="InterPro" id="IPR014001">
    <property type="entry name" value="Helicase_ATP-bd"/>
</dbReference>
<dbReference type="InterPro" id="IPR001650">
    <property type="entry name" value="Helicase_C-like"/>
</dbReference>
<dbReference type="InterPro" id="IPR027417">
    <property type="entry name" value="P-loop_NTPase"/>
</dbReference>
<dbReference type="InterPro" id="IPR038718">
    <property type="entry name" value="SNF2-like_sf"/>
</dbReference>
<dbReference type="InterPro" id="IPR049730">
    <property type="entry name" value="SNF2/RAD54-like_C"/>
</dbReference>
<dbReference type="InterPro" id="IPR000330">
    <property type="entry name" value="SNF2_N"/>
</dbReference>
<dbReference type="InterPro" id="IPR050496">
    <property type="entry name" value="SNF2_RAD54_helicase_repair"/>
</dbReference>
<dbReference type="PANTHER" id="PTHR45629:SF7">
    <property type="entry name" value="DNA EXCISION REPAIR PROTEIN ERCC-6-RELATED"/>
    <property type="match status" value="1"/>
</dbReference>
<dbReference type="PANTHER" id="PTHR45629">
    <property type="entry name" value="SNF2/RAD54 FAMILY MEMBER"/>
    <property type="match status" value="1"/>
</dbReference>
<dbReference type="Pfam" id="PF00271">
    <property type="entry name" value="Helicase_C"/>
    <property type="match status" value="1"/>
</dbReference>
<dbReference type="Pfam" id="PF00176">
    <property type="entry name" value="SNF2-rel_dom"/>
    <property type="match status" value="1"/>
</dbReference>
<dbReference type="Pfam" id="PF12851">
    <property type="entry name" value="Tet_JBP"/>
    <property type="match status" value="1"/>
</dbReference>
<dbReference type="SMART" id="SM00487">
    <property type="entry name" value="DEXDc"/>
    <property type="match status" value="1"/>
</dbReference>
<dbReference type="SMART" id="SM00490">
    <property type="entry name" value="HELICc"/>
    <property type="match status" value="1"/>
</dbReference>
<dbReference type="SUPFAM" id="SSF52540">
    <property type="entry name" value="P-loop containing nucleoside triphosphate hydrolases"/>
    <property type="match status" value="2"/>
</dbReference>
<dbReference type="PROSITE" id="PS51192">
    <property type="entry name" value="HELICASE_ATP_BIND_1"/>
    <property type="match status" value="1"/>
</dbReference>
<dbReference type="PROSITE" id="PS51194">
    <property type="entry name" value="HELICASE_CTER"/>
    <property type="match status" value="1"/>
</dbReference>
<gene>
    <name type="primary">JBP2</name>
    <name type="ORF">LinJ14.0040</name>
    <name type="ORF">LinJ_14_0040</name>
</gene>
<keyword id="KW-0067">ATP-binding</keyword>
<keyword id="KW-0223">Dioxygenase</keyword>
<keyword id="KW-0238">DNA-binding</keyword>
<keyword id="KW-0347">Helicase</keyword>
<keyword id="KW-0378">Hydrolase</keyword>
<keyword id="KW-0408">Iron</keyword>
<keyword id="KW-0479">Metal-binding</keyword>
<keyword id="KW-0547">Nucleotide-binding</keyword>
<keyword id="KW-0539">Nucleus</keyword>
<keyword id="KW-0560">Oxidoreductase</keyword>
<keyword id="KW-1185">Reference proteome</keyword>
<comment type="function">
    <text evidence="1">Dioxygenase that catalyzes the first step of DNA base J (beta-d-glucosyl-HOMedU) biosynthesis by converting thymine to 5-hydroxymethyluracil (HOMedU). DNA base J is a hypermodified thymidine residue found in the genome of kinetoplastid parasites, which is localized primarily to repetitive DNA, namely the telomeres, and is implicated in the regulation of antigenic variation. Probably also acts as a DNA helicase. Recognizes and binds specific regions of the genome, hydrolyzes ATP and allows the DNA base J de novo synthesis. Involved in initial synthesis of DNA base J, JBP1 being able to act via the basal level of DNA base J and propagate further synthesis. In contrast to JBP1, it does not specifically bind DNA base J, however it binds chromatin (By similarity).</text>
</comment>
<comment type="catalytic activity">
    <reaction evidence="1">
        <text>ATP + H2O = ADP + phosphate + H(+)</text>
        <dbReference type="Rhea" id="RHEA:13065"/>
        <dbReference type="ChEBI" id="CHEBI:15377"/>
        <dbReference type="ChEBI" id="CHEBI:15378"/>
        <dbReference type="ChEBI" id="CHEBI:30616"/>
        <dbReference type="ChEBI" id="CHEBI:43474"/>
        <dbReference type="ChEBI" id="CHEBI:456216"/>
        <dbReference type="EC" id="3.6.4.12"/>
    </reaction>
</comment>
<comment type="catalytic activity">
    <reaction evidence="1">
        <text>thymine + 2-oxoglutarate + O2 = 5-hydroxymethyluracil + succinate + CO2</text>
        <dbReference type="Rhea" id="RHEA:10316"/>
        <dbReference type="ChEBI" id="CHEBI:15379"/>
        <dbReference type="ChEBI" id="CHEBI:16526"/>
        <dbReference type="ChEBI" id="CHEBI:16810"/>
        <dbReference type="ChEBI" id="CHEBI:16964"/>
        <dbReference type="ChEBI" id="CHEBI:17821"/>
        <dbReference type="ChEBI" id="CHEBI:30031"/>
        <dbReference type="EC" id="1.14.11.6"/>
    </reaction>
</comment>
<comment type="cofactor">
    <cofactor evidence="2">
        <name>Fe(2+)</name>
        <dbReference type="ChEBI" id="CHEBI:29033"/>
    </cofactor>
    <text evidence="2">Binds 1 Fe(2+) ion per subunit.</text>
</comment>
<comment type="subcellular location">
    <subcellularLocation>
        <location evidence="1">Nucleus</location>
    </subcellularLocation>
</comment>
<comment type="similarity">
    <text evidence="6">In the C-terminal section; belongs to the SNF2/RAD54 helicase family.</text>
</comment>
<comment type="similarity">
    <text evidence="6">In the N-terminal section; belongs to the TET family. JBP2 subfamily.</text>
</comment>
<comment type="sequence caution" evidence="6">
    <conflict type="erroneous initiation">
        <sequence resource="EMBL-CDS" id="CAM66564"/>
    </conflict>
    <text>Truncated N-terminus.</text>
</comment>
<reference key="1">
    <citation type="journal article" date="2007" name="Nat. Genet.">
        <title>Comparative genomic analysis of three Leishmania species that cause diverse human disease.</title>
        <authorList>
            <person name="Peacock C.S."/>
            <person name="Seeger K."/>
            <person name="Harris D."/>
            <person name="Murphy L."/>
            <person name="Ruiz J.C."/>
            <person name="Quail M.A."/>
            <person name="Peters N."/>
            <person name="Adlem E."/>
            <person name="Tivey A."/>
            <person name="Aslett M."/>
            <person name="Kerhornou A."/>
            <person name="Ivens A."/>
            <person name="Fraser A."/>
            <person name="Rajandream M.-A."/>
            <person name="Carver T."/>
            <person name="Norbertczak H."/>
            <person name="Chillingworth T."/>
            <person name="Hance Z."/>
            <person name="Jagels K."/>
            <person name="Moule S."/>
            <person name="Ormond D."/>
            <person name="Rutter S."/>
            <person name="Sqaures R."/>
            <person name="Whitehead S."/>
            <person name="Rabbinowitsch E."/>
            <person name="Arrowsmith C."/>
            <person name="White B."/>
            <person name="Thurston S."/>
            <person name="Bringaud F."/>
            <person name="Baldauf S.L."/>
            <person name="Faulconbridge A."/>
            <person name="Jeffares D."/>
            <person name="Depledge D.P."/>
            <person name="Oyola S.O."/>
            <person name="Hilley J.D."/>
            <person name="Brito L.O."/>
            <person name="Tosi L.R.O."/>
            <person name="Barrell B."/>
            <person name="Cruz A.K."/>
            <person name="Mottram J.C."/>
            <person name="Smith D.F."/>
            <person name="Berriman M."/>
        </authorList>
    </citation>
    <scope>NUCLEOTIDE SEQUENCE [LARGE SCALE GENOMIC DNA]</scope>
    <source>
        <strain>JPCM5</strain>
    </source>
</reference>